<evidence type="ECO:0000255" key="1">
    <source>
        <dbReference type="HAMAP-Rule" id="MF_01328"/>
    </source>
</evidence>
<evidence type="ECO:0000256" key="2">
    <source>
        <dbReference type="SAM" id="MobiDB-lite"/>
    </source>
</evidence>
<evidence type="ECO:0000305" key="3"/>
<dbReference type="EMBL" id="CP000627">
    <property type="protein sequence ID" value="ABQ19504.1"/>
    <property type="molecule type" value="Genomic_DNA"/>
</dbReference>
<dbReference type="EMBL" id="CP001235">
    <property type="protein sequence ID" value="ACP10694.1"/>
    <property type="molecule type" value="Genomic_DNA"/>
</dbReference>
<dbReference type="RefSeq" id="WP_000422344.1">
    <property type="nucleotide sequence ID" value="NZ_JAACZH010000007.1"/>
</dbReference>
<dbReference type="SMR" id="A5F548"/>
<dbReference type="GeneID" id="94012753"/>
<dbReference type="KEGG" id="vco:VC0395_A2173"/>
<dbReference type="KEGG" id="vcr:VC395_2708"/>
<dbReference type="PATRIC" id="fig|345073.21.peg.2608"/>
<dbReference type="eggNOG" id="COG0088">
    <property type="taxonomic scope" value="Bacteria"/>
</dbReference>
<dbReference type="HOGENOM" id="CLU_041575_5_2_6"/>
<dbReference type="OrthoDB" id="9803201at2"/>
<dbReference type="Proteomes" id="UP000000249">
    <property type="component" value="Chromosome 2"/>
</dbReference>
<dbReference type="GO" id="GO:1990904">
    <property type="term" value="C:ribonucleoprotein complex"/>
    <property type="evidence" value="ECO:0007669"/>
    <property type="project" value="UniProtKB-KW"/>
</dbReference>
<dbReference type="GO" id="GO:0005840">
    <property type="term" value="C:ribosome"/>
    <property type="evidence" value="ECO:0007669"/>
    <property type="project" value="UniProtKB-KW"/>
</dbReference>
<dbReference type="GO" id="GO:0019843">
    <property type="term" value="F:rRNA binding"/>
    <property type="evidence" value="ECO:0007669"/>
    <property type="project" value="UniProtKB-UniRule"/>
</dbReference>
<dbReference type="GO" id="GO:0003735">
    <property type="term" value="F:structural constituent of ribosome"/>
    <property type="evidence" value="ECO:0007669"/>
    <property type="project" value="InterPro"/>
</dbReference>
<dbReference type="GO" id="GO:0006412">
    <property type="term" value="P:translation"/>
    <property type="evidence" value="ECO:0007669"/>
    <property type="project" value="UniProtKB-UniRule"/>
</dbReference>
<dbReference type="FunFam" id="3.40.1370.10:FF:000001">
    <property type="entry name" value="50S ribosomal protein L4"/>
    <property type="match status" value="1"/>
</dbReference>
<dbReference type="Gene3D" id="3.40.1370.10">
    <property type="match status" value="1"/>
</dbReference>
<dbReference type="HAMAP" id="MF_01328_B">
    <property type="entry name" value="Ribosomal_uL4_B"/>
    <property type="match status" value="1"/>
</dbReference>
<dbReference type="InterPro" id="IPR002136">
    <property type="entry name" value="Ribosomal_uL4"/>
</dbReference>
<dbReference type="InterPro" id="IPR013005">
    <property type="entry name" value="Ribosomal_uL4-like"/>
</dbReference>
<dbReference type="InterPro" id="IPR023574">
    <property type="entry name" value="Ribosomal_uL4_dom_sf"/>
</dbReference>
<dbReference type="NCBIfam" id="TIGR03953">
    <property type="entry name" value="rplD_bact"/>
    <property type="match status" value="1"/>
</dbReference>
<dbReference type="PANTHER" id="PTHR10746">
    <property type="entry name" value="50S RIBOSOMAL PROTEIN L4"/>
    <property type="match status" value="1"/>
</dbReference>
<dbReference type="PANTHER" id="PTHR10746:SF6">
    <property type="entry name" value="LARGE RIBOSOMAL SUBUNIT PROTEIN UL4M"/>
    <property type="match status" value="1"/>
</dbReference>
<dbReference type="Pfam" id="PF00573">
    <property type="entry name" value="Ribosomal_L4"/>
    <property type="match status" value="1"/>
</dbReference>
<dbReference type="SUPFAM" id="SSF52166">
    <property type="entry name" value="Ribosomal protein L4"/>
    <property type="match status" value="1"/>
</dbReference>
<feature type="chain" id="PRO_1000073274" description="Large ribosomal subunit protein uL4">
    <location>
        <begin position="1"/>
        <end position="200"/>
    </location>
</feature>
<feature type="region of interest" description="Disordered" evidence="2">
    <location>
        <begin position="42"/>
        <end position="65"/>
    </location>
</feature>
<gene>
    <name evidence="1" type="primary">rplD</name>
    <name type="ordered locus">VC0395_A2173</name>
    <name type="ordered locus">VC395_2708</name>
</gene>
<name>RL4_VIBC3</name>
<organism>
    <name type="scientific">Vibrio cholerae serotype O1 (strain ATCC 39541 / Classical Ogawa 395 / O395)</name>
    <dbReference type="NCBI Taxonomy" id="345073"/>
    <lineage>
        <taxon>Bacteria</taxon>
        <taxon>Pseudomonadati</taxon>
        <taxon>Pseudomonadota</taxon>
        <taxon>Gammaproteobacteria</taxon>
        <taxon>Vibrionales</taxon>
        <taxon>Vibrionaceae</taxon>
        <taxon>Vibrio</taxon>
    </lineage>
</organism>
<comment type="function">
    <text evidence="1">One of the primary rRNA binding proteins, this protein initially binds near the 5'-end of the 23S rRNA. It is important during the early stages of 50S assembly. It makes multiple contacts with different domains of the 23S rRNA in the assembled 50S subunit and ribosome.</text>
</comment>
<comment type="function">
    <text evidence="1">Forms part of the polypeptide exit tunnel.</text>
</comment>
<comment type="subunit">
    <text evidence="1">Part of the 50S ribosomal subunit.</text>
</comment>
<comment type="similarity">
    <text evidence="1">Belongs to the universal ribosomal protein uL4 family.</text>
</comment>
<protein>
    <recommendedName>
        <fullName evidence="1">Large ribosomal subunit protein uL4</fullName>
    </recommendedName>
    <alternativeName>
        <fullName evidence="3">50S ribosomal protein L4</fullName>
    </alternativeName>
</protein>
<proteinExistence type="inferred from homology"/>
<keyword id="KW-0687">Ribonucleoprotein</keyword>
<keyword id="KW-0689">Ribosomal protein</keyword>
<keyword id="KW-0694">RNA-binding</keyword>
<keyword id="KW-0699">rRNA-binding</keyword>
<accession>A5F548</accession>
<accession>C3LXJ4</accession>
<sequence>MELMVKGANALTVSETTFGREFNEALVHQVVVAYAAGARQGTRAQKTRSEVSGGGAKPWRQKGTGRARAGTIRSPIWRTGGVTFAAKPQDHSQKVNKKMYRGAMKSILSELVRQERLIVVENFSVEAPKTKALVAKLKELELNDVLIVTGEVDENLFLAARNLYKVDVRDVTGIDPVSLIAFDKVLMTAAAVKQVEEMLA</sequence>
<reference key="1">
    <citation type="submission" date="2007-03" db="EMBL/GenBank/DDBJ databases">
        <authorList>
            <person name="Heidelberg J."/>
        </authorList>
    </citation>
    <scope>NUCLEOTIDE SEQUENCE [LARGE SCALE GENOMIC DNA]</scope>
    <source>
        <strain>ATCC 39541 / Classical Ogawa 395 / O395</strain>
    </source>
</reference>
<reference key="2">
    <citation type="journal article" date="2008" name="PLoS ONE">
        <title>A recalibrated molecular clock and independent origins for the cholera pandemic clones.</title>
        <authorList>
            <person name="Feng L."/>
            <person name="Reeves P.R."/>
            <person name="Lan R."/>
            <person name="Ren Y."/>
            <person name="Gao C."/>
            <person name="Zhou Z."/>
            <person name="Ren Y."/>
            <person name="Cheng J."/>
            <person name="Wang W."/>
            <person name="Wang J."/>
            <person name="Qian W."/>
            <person name="Li D."/>
            <person name="Wang L."/>
        </authorList>
    </citation>
    <scope>NUCLEOTIDE SEQUENCE [LARGE SCALE GENOMIC DNA]</scope>
    <source>
        <strain>ATCC 39541 / Classical Ogawa 395 / O395</strain>
    </source>
</reference>